<dbReference type="EMBL" id="M37339">
    <property type="status" value="NOT_ANNOTATED_CDS"/>
    <property type="molecule type" value="Genomic_DNA"/>
</dbReference>
<dbReference type="RefSeq" id="WP_013302440.1">
    <property type="nucleotide sequence ID" value="NZ_QQSM01000074.1"/>
</dbReference>
<dbReference type="SMR" id="P32083"/>
<dbReference type="GeneID" id="93248806"/>
<dbReference type="PATRIC" id="fig|2100.18.peg.714"/>
<dbReference type="OMA" id="YRVVMNC"/>
<dbReference type="GO" id="GO:0003824">
    <property type="term" value="F:catalytic activity"/>
    <property type="evidence" value="ECO:0007669"/>
    <property type="project" value="InterPro"/>
</dbReference>
<dbReference type="GO" id="GO:0009117">
    <property type="term" value="P:nucleotide metabolic process"/>
    <property type="evidence" value="ECO:0007669"/>
    <property type="project" value="TreeGrafter"/>
</dbReference>
<dbReference type="Gene3D" id="3.30.428.10">
    <property type="entry name" value="HIT-like"/>
    <property type="match status" value="1"/>
</dbReference>
<dbReference type="InterPro" id="IPR019808">
    <property type="entry name" value="Histidine_triad_CS"/>
</dbReference>
<dbReference type="InterPro" id="IPR001310">
    <property type="entry name" value="Histidine_triad_HIT"/>
</dbReference>
<dbReference type="InterPro" id="IPR011146">
    <property type="entry name" value="HIT-like"/>
</dbReference>
<dbReference type="InterPro" id="IPR036265">
    <property type="entry name" value="HIT-like_sf"/>
</dbReference>
<dbReference type="InterPro" id="IPR054919">
    <property type="entry name" value="M_plasma_HinT"/>
</dbReference>
<dbReference type="NCBIfam" id="NF045834">
    <property type="entry name" value="M_plasma_HinT"/>
    <property type="match status" value="1"/>
</dbReference>
<dbReference type="PANTHER" id="PTHR46648:SF1">
    <property type="entry name" value="ADENOSINE 5'-MONOPHOSPHORAMIDASE HNT1"/>
    <property type="match status" value="1"/>
</dbReference>
<dbReference type="PANTHER" id="PTHR46648">
    <property type="entry name" value="HIT FAMILY PROTEIN 1"/>
    <property type="match status" value="1"/>
</dbReference>
<dbReference type="Pfam" id="PF01230">
    <property type="entry name" value="HIT"/>
    <property type="match status" value="1"/>
</dbReference>
<dbReference type="PRINTS" id="PR00332">
    <property type="entry name" value="HISTRIAD"/>
</dbReference>
<dbReference type="SUPFAM" id="SSF54197">
    <property type="entry name" value="HIT-like"/>
    <property type="match status" value="1"/>
</dbReference>
<dbReference type="PROSITE" id="PS00892">
    <property type="entry name" value="HIT_1"/>
    <property type="match status" value="1"/>
</dbReference>
<dbReference type="PROSITE" id="PS51084">
    <property type="entry name" value="HIT_2"/>
    <property type="match status" value="1"/>
</dbReference>
<proteinExistence type="predicted"/>
<sequence>MNNWQEELFLKIIKREEPATILYEDDKVIAFLDKYAHTKGHFLVVPKNYSRNLFSISDEDLSYLIVKAREFALQEIKKLGATGFKLLINNEPDAEQSIFHTHVHIIPYYKK</sequence>
<organism>
    <name type="scientific">Mesomycoplasma hyorhinis</name>
    <name type="common">Mycoplasma hyorhinis</name>
    <dbReference type="NCBI Taxonomy" id="2100"/>
    <lineage>
        <taxon>Bacteria</taxon>
        <taxon>Bacillati</taxon>
        <taxon>Mycoplasmatota</taxon>
        <taxon>Mycoplasmoidales</taxon>
        <taxon>Metamycoplasmataceae</taxon>
        <taxon>Mesomycoplasma</taxon>
    </lineage>
</organism>
<protein>
    <recommendedName>
        <fullName>Uncharacterized 13.1 kDa HIT-like protein in P37 5'region</fullName>
    </recommendedName>
</protein>
<reference key="1">
    <citation type="journal article" date="1988" name="EMBO J.">
        <title>A mycoplasma high-affinity transport system and the in vitro invasiveness of mouse sarcoma cells.</title>
        <authorList>
            <person name="Dudler R."/>
            <person name="Schmidhauser C."/>
            <person name="Parish R.W."/>
            <person name="Wettenhall R.E.H."/>
            <person name="Schmidt T."/>
        </authorList>
    </citation>
    <scope>NUCLEOTIDE SEQUENCE [GENOMIC DNA]</scope>
</reference>
<reference key="2">
    <citation type="journal article" date="1992" name="DNA Seq.">
        <title>The HIT protein family: a new family of proteins present in prokaryotes, yeast and mammals.</title>
        <authorList>
            <person name="Seraphin B."/>
        </authorList>
    </citation>
    <scope>IDENTIFICATION</scope>
    <scope>SIMILARITY TO OTHER MEMBERS OF THE HIT FAMILY</scope>
</reference>
<evidence type="ECO:0000255" key="1">
    <source>
        <dbReference type="PROSITE-ProRule" id="PRU00464"/>
    </source>
</evidence>
<accession>P32083</accession>
<feature type="chain" id="PRO_0000109822" description="Uncharacterized 13.1 kDa HIT-like protein in P37 5'region">
    <location>
        <begin position="1"/>
        <end position="111"/>
    </location>
</feature>
<feature type="domain" description="HIT" evidence="1">
    <location>
        <begin position="8"/>
        <end position="111"/>
    </location>
</feature>
<feature type="short sequence motif" description="Histidine triad motif">
    <location>
        <begin position="100"/>
        <end position="104"/>
    </location>
</feature>
<name>YHIT_MESHY</name>